<comment type="function">
    <text evidence="1">Rod linker protein, associated with allophycocyanin. Linker polypeptides determine the state of aggregation and the location of the disk-shaped phycobiliprotein units within the phycobilisome and modulate their spectroscopic properties in order to mediate a directed and optimal energy transfer (By similarity).</text>
</comment>
<comment type="subcellular location">
    <subcellularLocation>
        <location evidence="1">Cellular thylakoid membrane</location>
        <topology evidence="1">Peripheral membrane protein</topology>
        <orientation evidence="1">Cytoplasmic side</orientation>
    </subcellularLocation>
    <text evidence="1">This protein occurs in the rod, it is associated with allophycocyanin.</text>
</comment>
<comment type="similarity">
    <text evidence="3">Belongs to the phycobilisome linker protein family.</text>
</comment>
<sequence>MRVFKVTACVPSQTRIRTQRELQNTYFTKLVPYDNWFREQQRIMKMGGKIVKVELATGKPGTNTGLL</sequence>
<dbReference type="EMBL" id="X95898">
    <property type="protein sequence ID" value="CAA65143.2"/>
    <property type="molecule type" value="Genomic_DNA"/>
</dbReference>
<dbReference type="SMR" id="P72506"/>
<dbReference type="GO" id="GO:0030089">
    <property type="term" value="C:phycobilisome"/>
    <property type="evidence" value="ECO:0007669"/>
    <property type="project" value="UniProtKB-KW"/>
</dbReference>
<dbReference type="GO" id="GO:0031676">
    <property type="term" value="C:plasma membrane-derived thylakoid membrane"/>
    <property type="evidence" value="ECO:0007669"/>
    <property type="project" value="UniProtKB-SubCell"/>
</dbReference>
<dbReference type="GO" id="GO:0015979">
    <property type="term" value="P:photosynthesis"/>
    <property type="evidence" value="ECO:0007669"/>
    <property type="project" value="UniProtKB-KW"/>
</dbReference>
<dbReference type="Gene3D" id="3.30.1490.170">
    <property type="entry name" value="Allophycocyanin linker chain (domain)"/>
    <property type="match status" value="1"/>
</dbReference>
<dbReference type="InterPro" id="IPR011134">
    <property type="entry name" value="Allophyco_linker"/>
</dbReference>
<dbReference type="InterPro" id="IPR011064">
    <property type="entry name" value="Allophyco_linker_chain"/>
</dbReference>
<dbReference type="InterPro" id="IPR008213">
    <property type="entry name" value="CpcD-like_dom"/>
</dbReference>
<dbReference type="Pfam" id="PF01383">
    <property type="entry name" value="CpcD"/>
    <property type="match status" value="1"/>
</dbReference>
<dbReference type="PIRSF" id="PIRSF000083">
    <property type="entry name" value="Allophyco_linker"/>
    <property type="match status" value="1"/>
</dbReference>
<dbReference type="SMART" id="SM01094">
    <property type="entry name" value="CpcD"/>
    <property type="match status" value="1"/>
</dbReference>
<dbReference type="SUPFAM" id="SSF54580">
    <property type="entry name" value="Allophycocyanin linker chain (domain)"/>
    <property type="match status" value="1"/>
</dbReference>
<dbReference type="PROSITE" id="PS51441">
    <property type="entry name" value="CPCD_LIKE"/>
    <property type="match status" value="1"/>
</dbReference>
<organism>
    <name type="scientific">Arthrospira platensis</name>
    <name type="common">Spirulina platensis</name>
    <dbReference type="NCBI Taxonomy" id="118562"/>
    <lineage>
        <taxon>Bacteria</taxon>
        <taxon>Bacillati</taxon>
        <taxon>Cyanobacteriota</taxon>
        <taxon>Cyanophyceae</taxon>
        <taxon>Oscillatoriophycideae</taxon>
        <taxon>Oscillatoriales</taxon>
        <taxon>Microcoleaceae</taxon>
        <taxon>Arthrospira</taxon>
    </lineage>
</organism>
<keyword id="KW-0042">Antenna complex</keyword>
<keyword id="KW-0472">Membrane</keyword>
<keyword id="KW-0602">Photosynthesis</keyword>
<keyword id="KW-0605">Phycobilisome</keyword>
<keyword id="KW-0793">Thylakoid</keyword>
<protein>
    <recommendedName>
        <fullName>Phycobilisome 7.8 kDa linker polypeptide, allophycocyanin-associated, core</fullName>
    </recommendedName>
    <alternativeName>
        <fullName>LC 7.8</fullName>
    </alternativeName>
</protein>
<name>PYC1_ARTPT</name>
<reference key="1">
    <citation type="submission" date="2001-09" db="EMBL/GenBank/DDBJ databases">
        <title>Organization and nucleotide sequence of the a, b and c subunits of allophycocyanin genes from Spirulina platensis.</title>
        <authorList>
            <person name="Meesapyodsuk D."/>
            <person name="Chetkul W."/>
            <person name="Nomsasawai P."/>
            <person name="Anjard C."/>
            <person name="Tanticharoen M."/>
            <person name="Chevadhanarak S."/>
        </authorList>
    </citation>
    <scope>NUCLEOTIDE SEQUENCE [GENOMIC DNA]</scope>
    <source>
        <strain>Italy</strain>
    </source>
</reference>
<accession>P72506</accession>
<evidence type="ECO:0000250" key="1"/>
<evidence type="ECO:0000255" key="2">
    <source>
        <dbReference type="PROSITE-ProRule" id="PRU00771"/>
    </source>
</evidence>
<evidence type="ECO:0000305" key="3"/>
<gene>
    <name type="primary">apcC</name>
</gene>
<proteinExistence type="inferred from homology"/>
<feature type="chain" id="PRO_0000199237" description="Phycobilisome 7.8 kDa linker polypeptide, allophycocyanin-associated, core">
    <location>
        <begin position="1"/>
        <end position="67"/>
    </location>
</feature>
<feature type="domain" description="CpcD-like" evidence="2">
    <location>
        <begin position="1"/>
        <end position="56"/>
    </location>
</feature>